<protein>
    <recommendedName>
        <fullName>Exendin-2-long</fullName>
    </recommendedName>
    <component>
        <recommendedName>
            <fullName>Exendin-2</fullName>
        </recommendedName>
        <alternativeName>
            <fullName>Helodermin</fullName>
        </alternativeName>
        <alternativeName>
            <fullName>VIP-like 2</fullName>
        </alternativeName>
    </component>
</protein>
<evidence type="ECO:0000250" key="1"/>
<evidence type="ECO:0000255" key="2"/>
<evidence type="ECO:0000269" key="3">
    <source>
    </source>
</evidence>
<evidence type="ECO:0000269" key="4">
    <source>
    </source>
</evidence>
<evidence type="ECO:0000269" key="5">
    <source>
    </source>
</evidence>
<evidence type="ECO:0000269" key="6">
    <source>
    </source>
</evidence>
<evidence type="ECO:0000269" key="7">
    <source>
    </source>
</evidence>
<evidence type="ECO:0000269" key="8">
    <source>
    </source>
</evidence>
<evidence type="ECO:0000305" key="9"/>
<evidence type="ECO:0000305" key="10">
    <source>
    </source>
</evidence>
<organism>
    <name type="scientific">Heloderma suspectum</name>
    <name type="common">Gila monster</name>
    <dbReference type="NCBI Taxonomy" id="8554"/>
    <lineage>
        <taxon>Eukaryota</taxon>
        <taxon>Metazoa</taxon>
        <taxon>Chordata</taxon>
        <taxon>Craniata</taxon>
        <taxon>Vertebrata</taxon>
        <taxon>Euteleostomi</taxon>
        <taxon>Lepidosauria</taxon>
        <taxon>Squamata</taxon>
        <taxon>Bifurcata</taxon>
        <taxon>Unidentata</taxon>
        <taxon>Episquamata</taxon>
        <taxon>Toxicofera</taxon>
        <taxon>Anguimorpha</taxon>
        <taxon>Neoanguimorpha</taxon>
        <taxon>Helodermatidae</taxon>
        <taxon>Heloderma</taxon>
    </lineage>
</organism>
<keyword id="KW-0165">Cleavage on pair of basic residues</keyword>
<keyword id="KW-0903">Direct protein sequencing</keyword>
<keyword id="KW-1213">G-protein coupled receptor impairing toxin</keyword>
<keyword id="KW-0382">Hypotensive agent</keyword>
<keyword id="KW-0964">Secreted</keyword>
<keyword id="KW-0732">Signal</keyword>
<keyword id="KW-0800">Toxin</keyword>
<sequence>MKSILWLCVFGLLIATLFPVSWQMAIKSRLSSEDSETDQRLFESKRHSDAIFTEEYSKLLAKLALQKYLASILGSRTSPPPPSR</sequence>
<dbReference type="PIR" id="A01556">
    <property type="entry name" value="HWGHD"/>
</dbReference>
<dbReference type="SMR" id="P04204"/>
<dbReference type="GO" id="GO:0005576">
    <property type="term" value="C:extracellular region"/>
    <property type="evidence" value="ECO:0007669"/>
    <property type="project" value="UniProtKB-SubCell"/>
</dbReference>
<dbReference type="GO" id="GO:0005179">
    <property type="term" value="F:hormone activity"/>
    <property type="evidence" value="ECO:0007669"/>
    <property type="project" value="InterPro"/>
</dbReference>
<dbReference type="GO" id="GO:0090729">
    <property type="term" value="F:toxin activity"/>
    <property type="evidence" value="ECO:0007669"/>
    <property type="project" value="UniProtKB-KW"/>
</dbReference>
<dbReference type="GO" id="GO:0008217">
    <property type="term" value="P:regulation of blood pressure"/>
    <property type="evidence" value="ECO:0007669"/>
    <property type="project" value="UniProtKB-KW"/>
</dbReference>
<dbReference type="InterPro" id="IPR000532">
    <property type="entry name" value="Glucagon_GIP_secretin_VIP"/>
</dbReference>
<dbReference type="Pfam" id="PF00123">
    <property type="entry name" value="Hormone_2"/>
    <property type="match status" value="1"/>
</dbReference>
<dbReference type="SMART" id="SM00070">
    <property type="entry name" value="GLUCA"/>
    <property type="match status" value="1"/>
</dbReference>
<dbReference type="PROSITE" id="PS00260">
    <property type="entry name" value="GLUCAGON"/>
    <property type="match status" value="1"/>
</dbReference>
<name>EXE2_HELSU</name>
<feature type="signal peptide" evidence="2">
    <location>
        <begin position="1"/>
        <end position="23"/>
    </location>
</feature>
<feature type="propeptide" id="PRO_0000414094" evidence="1">
    <location>
        <begin position="24"/>
        <end position="44"/>
    </location>
</feature>
<feature type="peptide" id="PRO_0000414095" description="Exendin-2-long">
    <location>
        <begin position="47"/>
        <end position="83"/>
    </location>
</feature>
<feature type="peptide" id="PRO_0000044747" description="Exendin-2">
    <location>
        <begin position="47"/>
        <end position="81"/>
    </location>
</feature>
<comment type="function">
    <text evidence="3 4 8">Has vasoactive intestinal peptide(VIP)/secretin-like biological activity. Interacts with rat and human VIP receptors 1 (VIPR1) and 2 (VIPR2), with the highest affinity for the human VIPR2. Induces hypotension that is mediated by relaxation of cardiac smooth muscle. This vasodilation may not be transduced by VIP or PACAP receptors.</text>
</comment>
<comment type="subcellular location">
    <subcellularLocation>
        <location>Secreted</location>
    </subcellularLocation>
</comment>
<comment type="tissue specificity">
    <text evidence="7">Expressed by the venom gland. Not expressed in the pancreas, liver, stomach, small intestine, lung, heart, kidney, spleen, ovary, and brain.</text>
</comment>
<comment type="PTM">
    <text evidence="5 6">An amidated Pro-81 is described (PubMed:3569266, PubMed:6439576). Such an amidation is however not compatible with the sequence displayed (PubMed:10880980, PubMed:9545315). Indeed cDNAs do not encode a Gly that could serve as substrate for peptide alpha-amidation.</text>
</comment>
<comment type="similarity">
    <text evidence="9">Belongs to the glucagon family.</text>
</comment>
<comment type="caution">
    <text evidence="10">A longer peptide than exendin-2 has been described in the venom (PubMed:10880980). It has been indicated here as exendin-2-long.</text>
</comment>
<proteinExistence type="evidence at protein level"/>
<accession>P04204</accession>
<reference key="1">
    <citation type="journal article" date="1998" name="J. Biol. Chem.">
        <title>Molecular cloning of the helodermin and exendin-4 cDNAs in the lizard. Relationship to vasoactive intestinal polypeptide/pituitary adenylate cyclase activating polypeptide and glucagon-like peptide 1 and evidence against the existence of mammalian homologues.</title>
        <authorList>
            <person name="Pohl M."/>
            <person name="Wank S.A."/>
        </authorList>
    </citation>
    <scope>NUCLEOTIDE SEQUENCE [MRNA]</scope>
    <scope>TISSUE SPECIFICITY</scope>
</reference>
<reference key="2">
    <citation type="journal article" date="1984" name="FEBS Lett.">
        <title>Primary structure of helodermin, a VIP-secretin-like peptide isolated from Gila monster venom.</title>
        <authorList>
            <person name="Hoshino M."/>
            <person name="Yanaihara C."/>
            <person name="Hong Y.M."/>
            <person name="Kishida S."/>
            <person name="Katsumaru Y."/>
            <person name="Vandermeers A."/>
            <person name="Vandermeers-Piret M.-C."/>
            <person name="Robberecht P."/>
            <person name="Christophe J."/>
            <person name="Yanaihara N."/>
        </authorList>
    </citation>
    <scope>PROTEIN SEQUENCE OF 47-81</scope>
    <source>
        <tissue>Venom</tissue>
    </source>
</reference>
<reference key="3">
    <citation type="journal article" date="1987" name="Eur. J. Biochem.">
        <title>Chemical, immunological and biological properties of peptides like vasoactive-intestinal-peptide and peptide-histidine-isoleucinamide extracted from the venom of two lizards (Heloderma horridum and Heloderma suspectum).</title>
        <authorList>
            <person name="Vandermeers A."/>
            <person name="Gourlet P."/>
            <person name="Vandermeers-Piret M.C."/>
            <person name="Cauvin A."/>
            <person name="De Neef P."/>
            <person name="Rathe J."/>
            <person name="Svoboda M."/>
            <person name="Robberecht P."/>
            <person name="Christophe J."/>
        </authorList>
    </citation>
    <scope>SEQUENCE REVISION TO 54-55</scope>
</reference>
<reference key="4">
    <citation type="journal article" date="2000" name="Eur. J. Biochem.">
        <title>Evidence that the lizard helospectin peptides are O-glycosylated.</title>
        <authorList>
            <person name="Vandermeers-Piret M.C."/>
            <person name="Vandermeers A."/>
            <person name="Gourlet P."/>
            <person name="Ali M.H."/>
            <person name="Waelbroeck M."/>
            <person name="Robberecht P."/>
        </authorList>
    </citation>
    <scope>SEQUENCE REVISION TO 82-83</scope>
</reference>
<reference key="5">
    <citation type="journal article" date="1998" name="Ann. N. Y. Acad. Sci.">
        <title>Analogues of VIP, helodermin, and PACAP discriminate between rat and human VIP1 and VIP2 receptors.</title>
        <authorList>
            <person name="Gourlet P."/>
            <person name="Vandermeers A."/>
            <person name="Van Rampelbergh J."/>
            <person name="De Neef P."/>
            <person name="Cnudde J."/>
            <person name="Waelbroeck M."/>
            <person name="Robberecht P."/>
        </authorList>
    </citation>
    <scope>FUNCTION</scope>
</reference>
<reference key="6">
    <citation type="journal article" date="2004" name="Peptides">
        <title>Helospectin I and II evoke vasodilation in the intact peripheral microcirculation.</title>
        <authorList>
            <person name="Tsueshita T."/>
            <person name="Onyukusel H."/>
            <person name="Sethi V."/>
            <person name="Gandhi S."/>
            <person name="Rubinstein I."/>
        </authorList>
    </citation>
    <scope>FUNCTION</scope>
</reference>
<reference key="7">
    <citation type="journal article" date="2010" name="Mol. Biol. Evol.">
        <title>Novel venom proteins produced by differential domain-expression strategies in beaded lizards and gila monsters (genus Heloderma).</title>
        <authorList>
            <person name="Fry B.G."/>
            <person name="Roelants K."/>
            <person name="Winter K."/>
            <person name="Hodgson W.C."/>
            <person name="Griesman L."/>
            <person name="Kwok H.F."/>
            <person name="Scanlon D."/>
            <person name="Karas J."/>
            <person name="Shaw C."/>
            <person name="Wong L."/>
            <person name="Norman J.A."/>
        </authorList>
    </citation>
    <scope>SYNTHESIS</scope>
    <scope>FUNCTION</scope>
</reference>
<reference key="8">
    <citation type="journal article" date="1996" name="Biochemistry">
        <title>NMR spectroscopic evidence that helodermin, unlike other members of the secretin/VIP family of peptides, is substantially structured in water.</title>
        <authorList>
            <person name="Blankenfekdt W."/>
            <person name="Nokihara K."/>
            <person name="Naruse S."/>
            <person name="Lessel U."/>
            <person name="Schomburg D."/>
            <person name="Wray V."/>
        </authorList>
    </citation>
    <scope>STRUCTURE BY NMR OF 47-81</scope>
    <scope>SYNTHESIS OF 47-81 (AMIDATED)</scope>
</reference>